<comment type="function">
    <text evidence="1">Binds to 23S rRNA. Forms part of two intersubunit bridges in the 70S ribosome.</text>
</comment>
<comment type="subunit">
    <text evidence="1">Part of the 50S ribosomal subunit. Forms a cluster with proteins L3 and L19. In the 70S ribosome, L14 and L19 interact and together make contacts with the 16S rRNA in bridges B5 and B8.</text>
</comment>
<comment type="similarity">
    <text evidence="1">Belongs to the universal ribosomal protein uL14 family.</text>
</comment>
<feature type="chain" id="PRO_1000166902" description="Large ribosomal subunit protein uL14">
    <location>
        <begin position="1"/>
        <end position="122"/>
    </location>
</feature>
<dbReference type="EMBL" id="CP001357">
    <property type="protein sequence ID" value="ACN84592.1"/>
    <property type="molecule type" value="Genomic_DNA"/>
</dbReference>
<dbReference type="RefSeq" id="WP_008723391.1">
    <property type="nucleotide sequence ID" value="NC_012225.1"/>
</dbReference>
<dbReference type="SMR" id="C0QW06"/>
<dbReference type="STRING" id="565034.BHWA1_02134"/>
<dbReference type="GeneID" id="66487641"/>
<dbReference type="KEGG" id="bhy:BHWA1_02134"/>
<dbReference type="eggNOG" id="COG0093">
    <property type="taxonomic scope" value="Bacteria"/>
</dbReference>
<dbReference type="HOGENOM" id="CLU_095071_2_1_12"/>
<dbReference type="Proteomes" id="UP000001803">
    <property type="component" value="Chromosome"/>
</dbReference>
<dbReference type="GO" id="GO:0022625">
    <property type="term" value="C:cytosolic large ribosomal subunit"/>
    <property type="evidence" value="ECO:0007669"/>
    <property type="project" value="TreeGrafter"/>
</dbReference>
<dbReference type="GO" id="GO:0070180">
    <property type="term" value="F:large ribosomal subunit rRNA binding"/>
    <property type="evidence" value="ECO:0007669"/>
    <property type="project" value="TreeGrafter"/>
</dbReference>
<dbReference type="GO" id="GO:0003735">
    <property type="term" value="F:structural constituent of ribosome"/>
    <property type="evidence" value="ECO:0007669"/>
    <property type="project" value="InterPro"/>
</dbReference>
<dbReference type="GO" id="GO:0006412">
    <property type="term" value="P:translation"/>
    <property type="evidence" value="ECO:0007669"/>
    <property type="project" value="UniProtKB-UniRule"/>
</dbReference>
<dbReference type="CDD" id="cd00337">
    <property type="entry name" value="Ribosomal_uL14"/>
    <property type="match status" value="1"/>
</dbReference>
<dbReference type="FunFam" id="2.40.150.20:FF:000001">
    <property type="entry name" value="50S ribosomal protein L14"/>
    <property type="match status" value="1"/>
</dbReference>
<dbReference type="Gene3D" id="2.40.150.20">
    <property type="entry name" value="Ribosomal protein L14"/>
    <property type="match status" value="1"/>
</dbReference>
<dbReference type="HAMAP" id="MF_01367">
    <property type="entry name" value="Ribosomal_uL14"/>
    <property type="match status" value="1"/>
</dbReference>
<dbReference type="InterPro" id="IPR000218">
    <property type="entry name" value="Ribosomal_uL14"/>
</dbReference>
<dbReference type="InterPro" id="IPR005745">
    <property type="entry name" value="Ribosomal_uL14_bac-type"/>
</dbReference>
<dbReference type="InterPro" id="IPR019972">
    <property type="entry name" value="Ribosomal_uL14_CS"/>
</dbReference>
<dbReference type="InterPro" id="IPR036853">
    <property type="entry name" value="Ribosomal_uL14_sf"/>
</dbReference>
<dbReference type="NCBIfam" id="TIGR01067">
    <property type="entry name" value="rplN_bact"/>
    <property type="match status" value="1"/>
</dbReference>
<dbReference type="PANTHER" id="PTHR11761">
    <property type="entry name" value="50S/60S RIBOSOMAL PROTEIN L14/L23"/>
    <property type="match status" value="1"/>
</dbReference>
<dbReference type="PANTHER" id="PTHR11761:SF3">
    <property type="entry name" value="LARGE RIBOSOMAL SUBUNIT PROTEIN UL14M"/>
    <property type="match status" value="1"/>
</dbReference>
<dbReference type="Pfam" id="PF00238">
    <property type="entry name" value="Ribosomal_L14"/>
    <property type="match status" value="1"/>
</dbReference>
<dbReference type="SMART" id="SM01374">
    <property type="entry name" value="Ribosomal_L14"/>
    <property type="match status" value="1"/>
</dbReference>
<dbReference type="SUPFAM" id="SSF50193">
    <property type="entry name" value="Ribosomal protein L14"/>
    <property type="match status" value="1"/>
</dbReference>
<dbReference type="PROSITE" id="PS00049">
    <property type="entry name" value="RIBOSOMAL_L14"/>
    <property type="match status" value="1"/>
</dbReference>
<proteinExistence type="inferred from homology"/>
<organism>
    <name type="scientific">Brachyspira hyodysenteriae (strain ATCC 49526 / WA1)</name>
    <dbReference type="NCBI Taxonomy" id="565034"/>
    <lineage>
        <taxon>Bacteria</taxon>
        <taxon>Pseudomonadati</taxon>
        <taxon>Spirochaetota</taxon>
        <taxon>Spirochaetia</taxon>
        <taxon>Brachyspirales</taxon>
        <taxon>Brachyspiraceae</taxon>
        <taxon>Brachyspira</taxon>
    </lineage>
</organism>
<protein>
    <recommendedName>
        <fullName evidence="1">Large ribosomal subunit protein uL14</fullName>
    </recommendedName>
    <alternativeName>
        <fullName evidence="2">50S ribosomal protein L14</fullName>
    </alternativeName>
</protein>
<reference key="1">
    <citation type="journal article" date="2009" name="PLoS ONE">
        <title>Genome sequence of the pathogenic intestinal spirochete Brachyspira hyodysenteriae reveals adaptations to its lifestyle in the porcine large intestine.</title>
        <authorList>
            <person name="Bellgard M.I."/>
            <person name="Wanchanthuek P."/>
            <person name="La T."/>
            <person name="Ryan K."/>
            <person name="Moolhuijzen P."/>
            <person name="Albertyn Z."/>
            <person name="Shaban B."/>
            <person name="Motro Y."/>
            <person name="Dunn D.S."/>
            <person name="Schibeci D."/>
            <person name="Hunter A."/>
            <person name="Barrero R."/>
            <person name="Phillips N.D."/>
            <person name="Hampson D.J."/>
        </authorList>
    </citation>
    <scope>NUCLEOTIDE SEQUENCE [LARGE SCALE GENOMIC DNA]</scope>
    <source>
        <strain>ATCC 49526 / WA1</strain>
    </source>
</reference>
<accession>C0QW06</accession>
<keyword id="KW-0687">Ribonucleoprotein</keyword>
<keyword id="KW-0689">Ribosomal protein</keyword>
<keyword id="KW-0694">RNA-binding</keyword>
<keyword id="KW-0699">rRNA-binding</keyword>
<sequence length="122" mass="13521">MIQVPSTLNVADNTGVKKLKCIKVLGGSRRRYATLGDVIICSVTDIIPTCSIEKGKVVKAVIVRVKKEVRRPDGSYIRFDENAAVIVDDKKEPRGKRIFGPVARELRDRGFMKIVSLAPEVI</sequence>
<gene>
    <name evidence="1" type="primary">rplN</name>
    <name type="ordered locus">BHWA1_02134</name>
</gene>
<evidence type="ECO:0000255" key="1">
    <source>
        <dbReference type="HAMAP-Rule" id="MF_01367"/>
    </source>
</evidence>
<evidence type="ECO:0000305" key="2"/>
<name>RL14_BRAHW</name>